<gene>
    <name type="primary">cspA</name>
    <name type="synonym">cspA-1</name>
    <name type="ordered locus">BA_1135</name>
    <name type="ordered locus">GBAA_1135</name>
    <name type="ordered locus">BAS1054</name>
</gene>
<feature type="chain" id="PRO_0000100281" description="Major cold shock protein CspA">
    <location>
        <begin position="1"/>
        <end position="67"/>
    </location>
</feature>
<feature type="domain" description="CSD">
    <location>
        <begin position="5"/>
        <end position="64"/>
    </location>
</feature>
<sequence>MAVTGQVKWFNNEKGFGFIEVPGENDVFVHFSAIETDGFKSLEEGQKVSFEIEEGNRGPQAKNVIKL</sequence>
<comment type="function">
    <text evidence="1">Can bind to ATTGG and CCAAT motifs (Y-box motifs) of single-stranded oligonucleotides.</text>
</comment>
<comment type="subunit">
    <text evidence="1">Homodimer.</text>
</comment>
<comment type="subcellular location">
    <subcellularLocation>
        <location evidence="1">Cytoplasm</location>
    </subcellularLocation>
</comment>
<protein>
    <recommendedName>
        <fullName>Major cold shock protein CspA</fullName>
    </recommendedName>
</protein>
<dbReference type="EMBL" id="AE016879">
    <property type="protein sequence ID" value="AAP25105.1"/>
    <property type="molecule type" value="Genomic_DNA"/>
</dbReference>
<dbReference type="EMBL" id="AE017334">
    <property type="protein sequence ID" value="AAT30228.1"/>
    <property type="molecule type" value="Genomic_DNA"/>
</dbReference>
<dbReference type="EMBL" id="AE017225">
    <property type="protein sequence ID" value="AAT53377.1"/>
    <property type="molecule type" value="Genomic_DNA"/>
</dbReference>
<dbReference type="RefSeq" id="NP_843619.1">
    <property type="nucleotide sequence ID" value="NC_003997.3"/>
</dbReference>
<dbReference type="RefSeq" id="WP_000301519.1">
    <property type="nucleotide sequence ID" value="NZ_WXXJ01000044.1"/>
</dbReference>
<dbReference type="RefSeq" id="YP_027326.1">
    <property type="nucleotide sequence ID" value="NC_005945.1"/>
</dbReference>
<dbReference type="SMR" id="Q81TW8"/>
<dbReference type="STRING" id="261594.GBAA_1135"/>
<dbReference type="DNASU" id="1086206"/>
<dbReference type="GeneID" id="45021150"/>
<dbReference type="KEGG" id="ban:BA_1135"/>
<dbReference type="KEGG" id="bar:GBAA_1135"/>
<dbReference type="KEGG" id="bat:BAS1054"/>
<dbReference type="PATRIC" id="fig|198094.11.peg.1116"/>
<dbReference type="eggNOG" id="COG1278">
    <property type="taxonomic scope" value="Bacteria"/>
</dbReference>
<dbReference type="HOGENOM" id="CLU_117621_6_3_9"/>
<dbReference type="OMA" id="RAIQTQG"/>
<dbReference type="OrthoDB" id="9805039at2"/>
<dbReference type="Proteomes" id="UP000000427">
    <property type="component" value="Chromosome"/>
</dbReference>
<dbReference type="Proteomes" id="UP000000594">
    <property type="component" value="Chromosome"/>
</dbReference>
<dbReference type="GO" id="GO:0005737">
    <property type="term" value="C:cytoplasm"/>
    <property type="evidence" value="ECO:0007669"/>
    <property type="project" value="UniProtKB-SubCell"/>
</dbReference>
<dbReference type="GO" id="GO:0003677">
    <property type="term" value="F:DNA binding"/>
    <property type="evidence" value="ECO:0007669"/>
    <property type="project" value="UniProtKB-KW"/>
</dbReference>
<dbReference type="CDD" id="cd04458">
    <property type="entry name" value="CSP_CDS"/>
    <property type="match status" value="1"/>
</dbReference>
<dbReference type="FunFam" id="2.40.50.140:FF:000006">
    <property type="entry name" value="Cold shock protein CspC"/>
    <property type="match status" value="1"/>
</dbReference>
<dbReference type="Gene3D" id="6.20.370.130">
    <property type="match status" value="1"/>
</dbReference>
<dbReference type="Gene3D" id="2.40.50.140">
    <property type="entry name" value="Nucleic acid-binding proteins"/>
    <property type="match status" value="1"/>
</dbReference>
<dbReference type="InterPro" id="IPR012156">
    <property type="entry name" value="Cold_shock_CspA"/>
</dbReference>
<dbReference type="InterPro" id="IPR050181">
    <property type="entry name" value="Cold_shock_domain"/>
</dbReference>
<dbReference type="InterPro" id="IPR011129">
    <property type="entry name" value="CSD"/>
</dbReference>
<dbReference type="InterPro" id="IPR019844">
    <property type="entry name" value="CSD_CS"/>
</dbReference>
<dbReference type="InterPro" id="IPR002059">
    <property type="entry name" value="CSP_DNA-bd"/>
</dbReference>
<dbReference type="InterPro" id="IPR012340">
    <property type="entry name" value="NA-bd_OB-fold"/>
</dbReference>
<dbReference type="PANTHER" id="PTHR11544">
    <property type="entry name" value="COLD SHOCK DOMAIN CONTAINING PROTEINS"/>
    <property type="match status" value="1"/>
</dbReference>
<dbReference type="Pfam" id="PF00313">
    <property type="entry name" value="CSD"/>
    <property type="match status" value="1"/>
</dbReference>
<dbReference type="PIRSF" id="PIRSF002599">
    <property type="entry name" value="Cold_shock_A"/>
    <property type="match status" value="1"/>
</dbReference>
<dbReference type="PRINTS" id="PR00050">
    <property type="entry name" value="COLDSHOCK"/>
</dbReference>
<dbReference type="SMART" id="SM00357">
    <property type="entry name" value="CSP"/>
    <property type="match status" value="1"/>
</dbReference>
<dbReference type="SUPFAM" id="SSF50249">
    <property type="entry name" value="Nucleic acid-binding proteins"/>
    <property type="match status" value="1"/>
</dbReference>
<dbReference type="PROSITE" id="PS00352">
    <property type="entry name" value="CSD_1"/>
    <property type="match status" value="1"/>
</dbReference>
<dbReference type="PROSITE" id="PS51857">
    <property type="entry name" value="CSD_2"/>
    <property type="match status" value="1"/>
</dbReference>
<organism>
    <name type="scientific">Bacillus anthracis</name>
    <dbReference type="NCBI Taxonomy" id="1392"/>
    <lineage>
        <taxon>Bacteria</taxon>
        <taxon>Bacillati</taxon>
        <taxon>Bacillota</taxon>
        <taxon>Bacilli</taxon>
        <taxon>Bacillales</taxon>
        <taxon>Bacillaceae</taxon>
        <taxon>Bacillus</taxon>
        <taxon>Bacillus cereus group</taxon>
    </lineage>
</organism>
<reference key="1">
    <citation type="journal article" date="2003" name="Nature">
        <title>The genome sequence of Bacillus anthracis Ames and comparison to closely related bacteria.</title>
        <authorList>
            <person name="Read T.D."/>
            <person name="Peterson S.N."/>
            <person name="Tourasse N.J."/>
            <person name="Baillie L.W."/>
            <person name="Paulsen I.T."/>
            <person name="Nelson K.E."/>
            <person name="Tettelin H."/>
            <person name="Fouts D.E."/>
            <person name="Eisen J.A."/>
            <person name="Gill S.R."/>
            <person name="Holtzapple E.K."/>
            <person name="Okstad O.A."/>
            <person name="Helgason E."/>
            <person name="Rilstone J."/>
            <person name="Wu M."/>
            <person name="Kolonay J.F."/>
            <person name="Beanan M.J."/>
            <person name="Dodson R.J."/>
            <person name="Brinkac L.M."/>
            <person name="Gwinn M.L."/>
            <person name="DeBoy R.T."/>
            <person name="Madpu R."/>
            <person name="Daugherty S.C."/>
            <person name="Durkin A.S."/>
            <person name="Haft D.H."/>
            <person name="Nelson W.C."/>
            <person name="Peterson J.D."/>
            <person name="Pop M."/>
            <person name="Khouri H.M."/>
            <person name="Radune D."/>
            <person name="Benton J.L."/>
            <person name="Mahamoud Y."/>
            <person name="Jiang L."/>
            <person name="Hance I.R."/>
            <person name="Weidman J.F."/>
            <person name="Berry K.J."/>
            <person name="Plaut R.D."/>
            <person name="Wolf A.M."/>
            <person name="Watkins K.L."/>
            <person name="Nierman W.C."/>
            <person name="Hazen A."/>
            <person name="Cline R.T."/>
            <person name="Redmond C."/>
            <person name="Thwaite J.E."/>
            <person name="White O."/>
            <person name="Salzberg S.L."/>
            <person name="Thomason B."/>
            <person name="Friedlander A.M."/>
            <person name="Koehler T.M."/>
            <person name="Hanna P.C."/>
            <person name="Kolstoe A.-B."/>
            <person name="Fraser C.M."/>
        </authorList>
    </citation>
    <scope>NUCLEOTIDE SEQUENCE [LARGE SCALE GENOMIC DNA]</scope>
    <source>
        <strain>Ames / isolate Porton</strain>
    </source>
</reference>
<reference key="2">
    <citation type="journal article" date="2009" name="J. Bacteriol.">
        <title>The complete genome sequence of Bacillus anthracis Ames 'Ancestor'.</title>
        <authorList>
            <person name="Ravel J."/>
            <person name="Jiang L."/>
            <person name="Stanley S.T."/>
            <person name="Wilson M.R."/>
            <person name="Decker R.S."/>
            <person name="Read T.D."/>
            <person name="Worsham P."/>
            <person name="Keim P.S."/>
            <person name="Salzberg S.L."/>
            <person name="Fraser-Liggett C.M."/>
            <person name="Rasko D.A."/>
        </authorList>
    </citation>
    <scope>NUCLEOTIDE SEQUENCE [LARGE SCALE GENOMIC DNA]</scope>
    <source>
        <strain>Ames ancestor</strain>
    </source>
</reference>
<reference key="3">
    <citation type="submission" date="2004-01" db="EMBL/GenBank/DDBJ databases">
        <title>Complete genome sequence of Bacillus anthracis Sterne.</title>
        <authorList>
            <person name="Brettin T.S."/>
            <person name="Bruce D."/>
            <person name="Challacombe J.F."/>
            <person name="Gilna P."/>
            <person name="Han C."/>
            <person name="Hill K."/>
            <person name="Hitchcock P."/>
            <person name="Jackson P."/>
            <person name="Keim P."/>
            <person name="Longmire J."/>
            <person name="Lucas S."/>
            <person name="Okinaka R."/>
            <person name="Richardson P."/>
            <person name="Rubin E."/>
            <person name="Tice H."/>
        </authorList>
    </citation>
    <scope>NUCLEOTIDE SEQUENCE [LARGE SCALE GENOMIC DNA]</scope>
    <source>
        <strain>Sterne</strain>
    </source>
</reference>
<proteinExistence type="inferred from homology"/>
<accession>Q81TW8</accession>
<accession>Q6I254</accession>
<accession>Q6KVZ0</accession>
<name>CSPA_BACAN</name>
<evidence type="ECO:0000250" key="1"/>
<keyword id="KW-0010">Activator</keyword>
<keyword id="KW-0963">Cytoplasm</keyword>
<keyword id="KW-0238">DNA-binding</keyword>
<keyword id="KW-1185">Reference proteome</keyword>
<keyword id="KW-0804">Transcription</keyword>
<keyword id="KW-0805">Transcription regulation</keyword>